<protein>
    <recommendedName>
        <fullName evidence="1">Glycerol-3-phosphate dehydrogenase [NAD(P)+]</fullName>
        <ecNumber evidence="1">1.1.1.94</ecNumber>
    </recommendedName>
    <alternativeName>
        <fullName evidence="1">NAD(P)(+)-dependent glycerol-3-phosphate dehydrogenase</fullName>
    </alternativeName>
    <alternativeName>
        <fullName evidence="1">NAD(P)H-dependent dihydroxyacetone-phosphate reductase</fullName>
    </alternativeName>
</protein>
<evidence type="ECO:0000255" key="1">
    <source>
        <dbReference type="HAMAP-Rule" id="MF_00394"/>
    </source>
</evidence>
<dbReference type="EC" id="1.1.1.94" evidence="1"/>
<dbReference type="EMBL" id="CP000653">
    <property type="protein sequence ID" value="ABP58817.1"/>
    <property type="molecule type" value="Genomic_DNA"/>
</dbReference>
<dbReference type="RefSeq" id="WP_011915393.1">
    <property type="nucleotide sequence ID" value="NC_009436.1"/>
</dbReference>
<dbReference type="SMR" id="A4W537"/>
<dbReference type="STRING" id="399742.Ent638_0127"/>
<dbReference type="KEGG" id="ent:Ent638_0127"/>
<dbReference type="eggNOG" id="COG0240">
    <property type="taxonomic scope" value="Bacteria"/>
</dbReference>
<dbReference type="HOGENOM" id="CLU_033449_0_2_6"/>
<dbReference type="OrthoDB" id="9812273at2"/>
<dbReference type="UniPathway" id="UPA00940"/>
<dbReference type="Proteomes" id="UP000000230">
    <property type="component" value="Chromosome"/>
</dbReference>
<dbReference type="GO" id="GO:0005829">
    <property type="term" value="C:cytosol"/>
    <property type="evidence" value="ECO:0007669"/>
    <property type="project" value="TreeGrafter"/>
</dbReference>
<dbReference type="GO" id="GO:0047952">
    <property type="term" value="F:glycerol-3-phosphate dehydrogenase [NAD(P)+] activity"/>
    <property type="evidence" value="ECO:0007669"/>
    <property type="project" value="UniProtKB-UniRule"/>
</dbReference>
<dbReference type="GO" id="GO:0051287">
    <property type="term" value="F:NAD binding"/>
    <property type="evidence" value="ECO:0007669"/>
    <property type="project" value="InterPro"/>
</dbReference>
<dbReference type="GO" id="GO:0005975">
    <property type="term" value="P:carbohydrate metabolic process"/>
    <property type="evidence" value="ECO:0007669"/>
    <property type="project" value="InterPro"/>
</dbReference>
<dbReference type="GO" id="GO:0046167">
    <property type="term" value="P:glycerol-3-phosphate biosynthetic process"/>
    <property type="evidence" value="ECO:0007669"/>
    <property type="project" value="UniProtKB-UniRule"/>
</dbReference>
<dbReference type="GO" id="GO:0046168">
    <property type="term" value="P:glycerol-3-phosphate catabolic process"/>
    <property type="evidence" value="ECO:0007669"/>
    <property type="project" value="InterPro"/>
</dbReference>
<dbReference type="GO" id="GO:0046474">
    <property type="term" value="P:glycerophospholipid biosynthetic process"/>
    <property type="evidence" value="ECO:0007669"/>
    <property type="project" value="TreeGrafter"/>
</dbReference>
<dbReference type="FunFam" id="1.10.1040.10:FF:000001">
    <property type="entry name" value="Glycerol-3-phosphate dehydrogenase [NAD(P)+]"/>
    <property type="match status" value="1"/>
</dbReference>
<dbReference type="FunFam" id="3.40.50.720:FF:000019">
    <property type="entry name" value="Glycerol-3-phosphate dehydrogenase [NAD(P)+]"/>
    <property type="match status" value="1"/>
</dbReference>
<dbReference type="Gene3D" id="1.10.1040.10">
    <property type="entry name" value="N-(1-d-carboxylethyl)-l-norvaline Dehydrogenase, domain 2"/>
    <property type="match status" value="1"/>
</dbReference>
<dbReference type="Gene3D" id="3.40.50.720">
    <property type="entry name" value="NAD(P)-binding Rossmann-like Domain"/>
    <property type="match status" value="1"/>
</dbReference>
<dbReference type="HAMAP" id="MF_00394">
    <property type="entry name" value="NAD_Glyc3P_dehydrog"/>
    <property type="match status" value="1"/>
</dbReference>
<dbReference type="InterPro" id="IPR008927">
    <property type="entry name" value="6-PGluconate_DH-like_C_sf"/>
</dbReference>
<dbReference type="InterPro" id="IPR013328">
    <property type="entry name" value="6PGD_dom2"/>
</dbReference>
<dbReference type="InterPro" id="IPR006168">
    <property type="entry name" value="G3P_DH_NAD-dep"/>
</dbReference>
<dbReference type="InterPro" id="IPR006109">
    <property type="entry name" value="G3P_DH_NAD-dep_C"/>
</dbReference>
<dbReference type="InterPro" id="IPR011128">
    <property type="entry name" value="G3P_DH_NAD-dep_N"/>
</dbReference>
<dbReference type="InterPro" id="IPR036291">
    <property type="entry name" value="NAD(P)-bd_dom_sf"/>
</dbReference>
<dbReference type="NCBIfam" id="NF000939">
    <property type="entry name" value="PRK00094.1-1"/>
    <property type="match status" value="1"/>
</dbReference>
<dbReference type="NCBIfam" id="NF000940">
    <property type="entry name" value="PRK00094.1-2"/>
    <property type="match status" value="1"/>
</dbReference>
<dbReference type="NCBIfam" id="NF000942">
    <property type="entry name" value="PRK00094.1-4"/>
    <property type="match status" value="1"/>
</dbReference>
<dbReference type="PANTHER" id="PTHR11728">
    <property type="entry name" value="GLYCEROL-3-PHOSPHATE DEHYDROGENASE"/>
    <property type="match status" value="1"/>
</dbReference>
<dbReference type="PANTHER" id="PTHR11728:SF1">
    <property type="entry name" value="GLYCEROL-3-PHOSPHATE DEHYDROGENASE [NAD(+)] 2, CHLOROPLASTIC"/>
    <property type="match status" value="1"/>
</dbReference>
<dbReference type="Pfam" id="PF07479">
    <property type="entry name" value="NAD_Gly3P_dh_C"/>
    <property type="match status" value="1"/>
</dbReference>
<dbReference type="Pfam" id="PF01210">
    <property type="entry name" value="NAD_Gly3P_dh_N"/>
    <property type="match status" value="1"/>
</dbReference>
<dbReference type="PIRSF" id="PIRSF000114">
    <property type="entry name" value="Glycerol-3-P_dh"/>
    <property type="match status" value="1"/>
</dbReference>
<dbReference type="PRINTS" id="PR00077">
    <property type="entry name" value="GPDHDRGNASE"/>
</dbReference>
<dbReference type="SUPFAM" id="SSF48179">
    <property type="entry name" value="6-phosphogluconate dehydrogenase C-terminal domain-like"/>
    <property type="match status" value="1"/>
</dbReference>
<dbReference type="SUPFAM" id="SSF51735">
    <property type="entry name" value="NAD(P)-binding Rossmann-fold domains"/>
    <property type="match status" value="1"/>
</dbReference>
<dbReference type="PROSITE" id="PS00957">
    <property type="entry name" value="NAD_G3PDH"/>
    <property type="match status" value="1"/>
</dbReference>
<proteinExistence type="inferred from homology"/>
<feature type="chain" id="PRO_1000060784" description="Glycerol-3-phosphate dehydrogenase [NAD(P)+]">
    <location>
        <begin position="1"/>
        <end position="339"/>
    </location>
</feature>
<feature type="active site" description="Proton acceptor" evidence="1">
    <location>
        <position position="195"/>
    </location>
</feature>
<feature type="binding site" evidence="1">
    <location>
        <position position="15"/>
    </location>
    <ligand>
        <name>NADPH</name>
        <dbReference type="ChEBI" id="CHEBI:57783"/>
    </ligand>
</feature>
<feature type="binding site" evidence="1">
    <location>
        <position position="16"/>
    </location>
    <ligand>
        <name>NADPH</name>
        <dbReference type="ChEBI" id="CHEBI:57783"/>
    </ligand>
</feature>
<feature type="binding site" evidence="1">
    <location>
        <position position="36"/>
    </location>
    <ligand>
        <name>NADPH</name>
        <dbReference type="ChEBI" id="CHEBI:57783"/>
    </ligand>
</feature>
<feature type="binding site" evidence="1">
    <location>
        <position position="110"/>
    </location>
    <ligand>
        <name>NADPH</name>
        <dbReference type="ChEBI" id="CHEBI:57783"/>
    </ligand>
</feature>
<feature type="binding site" evidence="1">
    <location>
        <position position="110"/>
    </location>
    <ligand>
        <name>sn-glycerol 3-phosphate</name>
        <dbReference type="ChEBI" id="CHEBI:57597"/>
    </ligand>
</feature>
<feature type="binding site" evidence="1">
    <location>
        <position position="139"/>
    </location>
    <ligand>
        <name>sn-glycerol 3-phosphate</name>
        <dbReference type="ChEBI" id="CHEBI:57597"/>
    </ligand>
</feature>
<feature type="binding site" evidence="1">
    <location>
        <position position="141"/>
    </location>
    <ligand>
        <name>sn-glycerol 3-phosphate</name>
        <dbReference type="ChEBI" id="CHEBI:57597"/>
    </ligand>
</feature>
<feature type="binding site" evidence="1">
    <location>
        <position position="143"/>
    </location>
    <ligand>
        <name>NADPH</name>
        <dbReference type="ChEBI" id="CHEBI:57783"/>
    </ligand>
</feature>
<feature type="binding site" evidence="1">
    <location>
        <position position="195"/>
    </location>
    <ligand>
        <name>sn-glycerol 3-phosphate</name>
        <dbReference type="ChEBI" id="CHEBI:57597"/>
    </ligand>
</feature>
<feature type="binding site" evidence="1">
    <location>
        <position position="248"/>
    </location>
    <ligand>
        <name>sn-glycerol 3-phosphate</name>
        <dbReference type="ChEBI" id="CHEBI:57597"/>
    </ligand>
</feature>
<feature type="binding site" evidence="1">
    <location>
        <position position="258"/>
    </location>
    <ligand>
        <name>sn-glycerol 3-phosphate</name>
        <dbReference type="ChEBI" id="CHEBI:57597"/>
    </ligand>
</feature>
<feature type="binding site" evidence="1">
    <location>
        <position position="259"/>
    </location>
    <ligand>
        <name>NADPH</name>
        <dbReference type="ChEBI" id="CHEBI:57783"/>
    </ligand>
</feature>
<feature type="binding site" evidence="1">
    <location>
        <position position="259"/>
    </location>
    <ligand>
        <name>sn-glycerol 3-phosphate</name>
        <dbReference type="ChEBI" id="CHEBI:57597"/>
    </ligand>
</feature>
<feature type="binding site" evidence="1">
    <location>
        <position position="260"/>
    </location>
    <ligand>
        <name>sn-glycerol 3-phosphate</name>
        <dbReference type="ChEBI" id="CHEBI:57597"/>
    </ligand>
</feature>
<feature type="binding site" evidence="1">
    <location>
        <position position="283"/>
    </location>
    <ligand>
        <name>NADPH</name>
        <dbReference type="ChEBI" id="CHEBI:57783"/>
    </ligand>
</feature>
<feature type="binding site" evidence="1">
    <location>
        <position position="285"/>
    </location>
    <ligand>
        <name>NADPH</name>
        <dbReference type="ChEBI" id="CHEBI:57783"/>
    </ligand>
</feature>
<gene>
    <name evidence="1" type="primary">gpsA</name>
    <name type="ordered locus">Ent638_0127</name>
</gene>
<accession>A4W537</accession>
<organism>
    <name type="scientific">Enterobacter sp. (strain 638)</name>
    <dbReference type="NCBI Taxonomy" id="399742"/>
    <lineage>
        <taxon>Bacteria</taxon>
        <taxon>Pseudomonadati</taxon>
        <taxon>Pseudomonadota</taxon>
        <taxon>Gammaproteobacteria</taxon>
        <taxon>Enterobacterales</taxon>
        <taxon>Enterobacteriaceae</taxon>
        <taxon>Enterobacter</taxon>
    </lineage>
</organism>
<comment type="function">
    <text evidence="1">Catalyzes the reduction of the glycolytic intermediate dihydroxyacetone phosphate (DHAP) to sn-glycerol 3-phosphate (G3P), the key precursor for phospholipid synthesis.</text>
</comment>
<comment type="catalytic activity">
    <reaction evidence="1">
        <text>sn-glycerol 3-phosphate + NAD(+) = dihydroxyacetone phosphate + NADH + H(+)</text>
        <dbReference type="Rhea" id="RHEA:11092"/>
        <dbReference type="ChEBI" id="CHEBI:15378"/>
        <dbReference type="ChEBI" id="CHEBI:57540"/>
        <dbReference type="ChEBI" id="CHEBI:57597"/>
        <dbReference type="ChEBI" id="CHEBI:57642"/>
        <dbReference type="ChEBI" id="CHEBI:57945"/>
        <dbReference type="EC" id="1.1.1.94"/>
    </reaction>
    <physiologicalReaction direction="right-to-left" evidence="1">
        <dbReference type="Rhea" id="RHEA:11094"/>
    </physiologicalReaction>
</comment>
<comment type="catalytic activity">
    <reaction evidence="1">
        <text>sn-glycerol 3-phosphate + NADP(+) = dihydroxyacetone phosphate + NADPH + H(+)</text>
        <dbReference type="Rhea" id="RHEA:11096"/>
        <dbReference type="ChEBI" id="CHEBI:15378"/>
        <dbReference type="ChEBI" id="CHEBI:57597"/>
        <dbReference type="ChEBI" id="CHEBI:57642"/>
        <dbReference type="ChEBI" id="CHEBI:57783"/>
        <dbReference type="ChEBI" id="CHEBI:58349"/>
        <dbReference type="EC" id="1.1.1.94"/>
    </reaction>
    <physiologicalReaction direction="right-to-left" evidence="1">
        <dbReference type="Rhea" id="RHEA:11098"/>
    </physiologicalReaction>
</comment>
<comment type="pathway">
    <text evidence="1">Membrane lipid metabolism; glycerophospholipid metabolism.</text>
</comment>
<comment type="subcellular location">
    <subcellularLocation>
        <location evidence="1">Cytoplasm</location>
    </subcellularLocation>
</comment>
<comment type="similarity">
    <text evidence="1">Belongs to the NAD-dependent glycerol-3-phosphate dehydrogenase family.</text>
</comment>
<reference key="1">
    <citation type="journal article" date="2010" name="PLoS Genet.">
        <title>Genome sequence of the plant growth promoting endophytic bacterium Enterobacter sp. 638.</title>
        <authorList>
            <person name="Taghavi S."/>
            <person name="van der Lelie D."/>
            <person name="Hoffman A."/>
            <person name="Zhang Y.B."/>
            <person name="Walla M.D."/>
            <person name="Vangronsveld J."/>
            <person name="Newman L."/>
            <person name="Monchy S."/>
        </authorList>
    </citation>
    <scope>NUCLEOTIDE SEQUENCE [LARGE SCALE GENOMIC DNA]</scope>
    <source>
        <strain>638</strain>
    </source>
</reference>
<sequence>MSTVNASMTVIGAGSYGTALAITLARNGHEVVLWGHDPKHIATLQHDRCNVAFLPDVPFPDSLHLESDLATALAASRNILVVVPSHVFGQVLHQIKPLMRADARIVWATKGLEAETGRLLQDVAREVLGDDIPLAVISGPTFAKELAAGLPTAISLASTDQTFSDDLQHLLHCGKSFRVYSNPDFIGVQLGGAVKNVIAIGAGMSDGIGFGANARTALITRGLTEMSRLGEALGADPATFMGMAGLGDLVLTCTDNQSRNRRFGMMLGQGMDVMGAQEKIGQVVEGYRNTKEVRELAHRFGVEMPITEEIYQVLYCGKNAREAALTLLGRSRKEERSSS</sequence>
<keyword id="KW-0963">Cytoplasm</keyword>
<keyword id="KW-0444">Lipid biosynthesis</keyword>
<keyword id="KW-0443">Lipid metabolism</keyword>
<keyword id="KW-0520">NAD</keyword>
<keyword id="KW-0521">NADP</keyword>
<keyword id="KW-0547">Nucleotide-binding</keyword>
<keyword id="KW-0560">Oxidoreductase</keyword>
<keyword id="KW-0594">Phospholipid biosynthesis</keyword>
<keyword id="KW-1208">Phospholipid metabolism</keyword>
<name>GPDA_ENT38</name>